<gene>
    <name type="ordered locus">Kcr_1509</name>
</gene>
<name>NTPTH_KORCO</name>
<dbReference type="EC" id="3.6.1.15" evidence="1"/>
<dbReference type="EMBL" id="CP000968">
    <property type="protein sequence ID" value="ACB08255.1"/>
    <property type="molecule type" value="Genomic_DNA"/>
</dbReference>
<dbReference type="RefSeq" id="WP_012310152.1">
    <property type="nucleotide sequence ID" value="NC_010482.1"/>
</dbReference>
<dbReference type="SMR" id="B1L726"/>
<dbReference type="FunCoup" id="B1L726">
    <property type="interactions" value="101"/>
</dbReference>
<dbReference type="STRING" id="374847.Kcr_1509"/>
<dbReference type="EnsemblBacteria" id="ACB08255">
    <property type="protein sequence ID" value="ACB08255"/>
    <property type="gene ID" value="Kcr_1509"/>
</dbReference>
<dbReference type="GeneID" id="6094786"/>
<dbReference type="KEGG" id="kcr:Kcr_1509"/>
<dbReference type="eggNOG" id="arCOG01034">
    <property type="taxonomic scope" value="Archaea"/>
</dbReference>
<dbReference type="HOGENOM" id="CLU_103145_1_1_2"/>
<dbReference type="InParanoid" id="B1L726"/>
<dbReference type="OrthoDB" id="52698at2157"/>
<dbReference type="PhylomeDB" id="B1L726"/>
<dbReference type="Proteomes" id="UP000001686">
    <property type="component" value="Chromosome"/>
</dbReference>
<dbReference type="GO" id="GO:0005524">
    <property type="term" value="F:ATP binding"/>
    <property type="evidence" value="ECO:0007669"/>
    <property type="project" value="UniProtKB-UniRule"/>
</dbReference>
<dbReference type="GO" id="GO:0016887">
    <property type="term" value="F:ATP hydrolysis activity"/>
    <property type="evidence" value="ECO:0007669"/>
    <property type="project" value="InterPro"/>
</dbReference>
<dbReference type="CDD" id="cd19482">
    <property type="entry name" value="RecA-like_Thep1"/>
    <property type="match status" value="1"/>
</dbReference>
<dbReference type="Gene3D" id="3.40.50.300">
    <property type="entry name" value="P-loop containing nucleotide triphosphate hydrolases"/>
    <property type="match status" value="1"/>
</dbReference>
<dbReference type="HAMAP" id="MF_00796">
    <property type="entry name" value="NTPase_1"/>
    <property type="match status" value="1"/>
</dbReference>
<dbReference type="InterPro" id="IPR003593">
    <property type="entry name" value="AAA+_ATPase"/>
</dbReference>
<dbReference type="InterPro" id="IPR004948">
    <property type="entry name" value="Nuc-triphosphatase_THEP1"/>
</dbReference>
<dbReference type="InterPro" id="IPR027417">
    <property type="entry name" value="P-loop_NTPase"/>
</dbReference>
<dbReference type="PANTHER" id="PTHR43146">
    <property type="entry name" value="CANCER-RELATED NUCLEOSIDE-TRIPHOSPHATASE"/>
    <property type="match status" value="1"/>
</dbReference>
<dbReference type="PANTHER" id="PTHR43146:SF1">
    <property type="entry name" value="CANCER-RELATED NUCLEOSIDE-TRIPHOSPHATASE"/>
    <property type="match status" value="1"/>
</dbReference>
<dbReference type="Pfam" id="PF03266">
    <property type="entry name" value="NTPase_1"/>
    <property type="match status" value="1"/>
</dbReference>
<dbReference type="SMART" id="SM00382">
    <property type="entry name" value="AAA"/>
    <property type="match status" value="1"/>
</dbReference>
<dbReference type="SUPFAM" id="SSF52540">
    <property type="entry name" value="P-loop containing nucleoside triphosphate hydrolases"/>
    <property type="match status" value="1"/>
</dbReference>
<organism>
    <name type="scientific">Korarchaeum cryptofilum (strain OPF8)</name>
    <dbReference type="NCBI Taxonomy" id="374847"/>
    <lineage>
        <taxon>Archaea</taxon>
        <taxon>Thermoproteota</taxon>
        <taxon>Candidatus Korarchaeia</taxon>
        <taxon>Candidatus Korarchaeales</taxon>
        <taxon>Candidatus Korarchaeaceae</taxon>
        <taxon>Candidatus Korarchaeum</taxon>
    </lineage>
</organism>
<sequence length="195" mass="21937">MRKEGKFIIIGRPGSGKSTCIMLLLEKLRASGTKVGGIRTPELRERGIRKGFAVEDILTGQSDIFASTDFREGPSVSKYRVSVERFESIAIPALRRALEECEVVVIDEIGKMELLSRNFLEVVRDIWESEIISVGTAPLVRIEEIEKLKSSSEVIIIERGDSERISNYLFNRISDLLRVSRSSHRPSPRGTLSFL</sequence>
<accession>B1L726</accession>
<reference key="1">
    <citation type="journal article" date="2008" name="Proc. Natl. Acad. Sci. U.S.A.">
        <title>A korarchaeal genome reveals new insights into the evolution of the Archaea.</title>
        <authorList>
            <person name="Elkins J.G."/>
            <person name="Podar M."/>
            <person name="Graham D.E."/>
            <person name="Makarova K.S."/>
            <person name="Wolf Y."/>
            <person name="Randau L."/>
            <person name="Hedlund B.P."/>
            <person name="Brochier-Armanet C."/>
            <person name="Kunin V."/>
            <person name="Anderson I."/>
            <person name="Lapidus A."/>
            <person name="Goltsman E."/>
            <person name="Barry K."/>
            <person name="Koonin E.V."/>
            <person name="Hugenholtz P."/>
            <person name="Kyrpides N."/>
            <person name="Wanner G."/>
            <person name="Richardson P."/>
            <person name="Keller M."/>
            <person name="Stetter K.O."/>
        </authorList>
    </citation>
    <scope>NUCLEOTIDE SEQUENCE [LARGE SCALE GENOMIC DNA]</scope>
    <source>
        <strain>OPF8</strain>
    </source>
</reference>
<proteinExistence type="inferred from homology"/>
<keyword id="KW-0067">ATP-binding</keyword>
<keyword id="KW-0378">Hydrolase</keyword>
<keyword id="KW-0547">Nucleotide-binding</keyword>
<keyword id="KW-1185">Reference proteome</keyword>
<protein>
    <recommendedName>
        <fullName evidence="1">Nucleoside-triphosphatase THEP1</fullName>
        <shortName evidence="1">NTPase THEP1</shortName>
        <ecNumber evidence="1">3.6.1.15</ecNumber>
    </recommendedName>
    <alternativeName>
        <fullName evidence="1">Nucleoside triphosphate phosphohydrolase</fullName>
    </alternativeName>
</protein>
<feature type="chain" id="PRO_0000360023" description="Nucleoside-triphosphatase THEP1">
    <location>
        <begin position="1"/>
        <end position="195"/>
    </location>
</feature>
<feature type="binding site" evidence="1">
    <location>
        <begin position="11"/>
        <end position="18"/>
    </location>
    <ligand>
        <name>ATP</name>
        <dbReference type="ChEBI" id="CHEBI:30616"/>
    </ligand>
</feature>
<feature type="binding site" evidence="1">
    <location>
        <begin position="103"/>
        <end position="110"/>
    </location>
    <ligand>
        <name>ATP</name>
        <dbReference type="ChEBI" id="CHEBI:30616"/>
    </ligand>
</feature>
<evidence type="ECO:0000255" key="1">
    <source>
        <dbReference type="HAMAP-Rule" id="MF_00796"/>
    </source>
</evidence>
<comment type="function">
    <text evidence="1">Has nucleotide phosphatase activity towards ATP, GTP, CTP, TTP and UTP. May hydrolyze nucleoside diphosphates with lower efficiency.</text>
</comment>
<comment type="catalytic activity">
    <reaction evidence="1">
        <text>a ribonucleoside 5'-triphosphate + H2O = a ribonucleoside 5'-diphosphate + phosphate + H(+)</text>
        <dbReference type="Rhea" id="RHEA:23680"/>
        <dbReference type="ChEBI" id="CHEBI:15377"/>
        <dbReference type="ChEBI" id="CHEBI:15378"/>
        <dbReference type="ChEBI" id="CHEBI:43474"/>
        <dbReference type="ChEBI" id="CHEBI:57930"/>
        <dbReference type="ChEBI" id="CHEBI:61557"/>
        <dbReference type="EC" id="3.6.1.15"/>
    </reaction>
</comment>
<comment type="similarity">
    <text evidence="1">Belongs to the THEP1 NTPase family.</text>
</comment>